<feature type="chain" id="PRO_1000068422" description="dITP/XTP pyrophosphatase">
    <location>
        <begin position="1"/>
        <end position="202"/>
    </location>
</feature>
<feature type="active site" description="Proton acceptor" evidence="1">
    <location>
        <position position="68"/>
    </location>
</feature>
<feature type="binding site" evidence="1">
    <location>
        <begin position="7"/>
        <end position="12"/>
    </location>
    <ligand>
        <name>substrate</name>
    </ligand>
</feature>
<feature type="binding site" evidence="1">
    <location>
        <position position="68"/>
    </location>
    <ligand>
        <name>Mg(2+)</name>
        <dbReference type="ChEBI" id="CHEBI:18420"/>
    </ligand>
</feature>
<feature type="binding site" evidence="1">
    <location>
        <position position="69"/>
    </location>
    <ligand>
        <name>substrate</name>
    </ligand>
</feature>
<feature type="binding site" evidence="1">
    <location>
        <begin position="156"/>
        <end position="159"/>
    </location>
    <ligand>
        <name>substrate</name>
    </ligand>
</feature>
<feature type="binding site" evidence="1">
    <location>
        <position position="179"/>
    </location>
    <ligand>
        <name>substrate</name>
    </ligand>
</feature>
<feature type="binding site" evidence="1">
    <location>
        <begin position="184"/>
        <end position="185"/>
    </location>
    <ligand>
        <name>substrate</name>
    </ligand>
</feature>
<keyword id="KW-0378">Hydrolase</keyword>
<keyword id="KW-0460">Magnesium</keyword>
<keyword id="KW-0479">Metal-binding</keyword>
<keyword id="KW-0546">Nucleotide metabolism</keyword>
<keyword id="KW-0547">Nucleotide-binding</keyword>
<keyword id="KW-1185">Reference proteome</keyword>
<proteinExistence type="inferred from homology"/>
<protein>
    <recommendedName>
        <fullName evidence="1">dITP/XTP pyrophosphatase</fullName>
        <ecNumber evidence="1">3.6.1.66</ecNumber>
    </recommendedName>
    <alternativeName>
        <fullName evidence="1">Non-canonical purine NTP pyrophosphatase</fullName>
    </alternativeName>
    <alternativeName>
        <fullName evidence="1">Non-standard purine NTP pyrophosphatase</fullName>
    </alternativeName>
    <alternativeName>
        <fullName evidence="1">Nucleoside-triphosphate diphosphatase</fullName>
    </alternativeName>
    <alternativeName>
        <fullName evidence="1">Nucleoside-triphosphate pyrophosphatase</fullName>
        <shortName evidence="1">NTPase</shortName>
    </alternativeName>
</protein>
<comment type="function">
    <text evidence="1">Pyrophosphatase that catalyzes the hydrolysis of nucleoside triphosphates to their monophosphate derivatives, with a high preference for the non-canonical purine nucleotides XTP (xanthosine triphosphate), dITP (deoxyinosine triphosphate) and ITP. Seems to function as a house-cleaning enzyme that removes non-canonical purine nucleotides from the nucleotide pool, thus preventing their incorporation into DNA/RNA and avoiding chromosomal lesions.</text>
</comment>
<comment type="catalytic activity">
    <reaction evidence="1">
        <text>XTP + H2O = XMP + diphosphate + H(+)</text>
        <dbReference type="Rhea" id="RHEA:28610"/>
        <dbReference type="ChEBI" id="CHEBI:15377"/>
        <dbReference type="ChEBI" id="CHEBI:15378"/>
        <dbReference type="ChEBI" id="CHEBI:33019"/>
        <dbReference type="ChEBI" id="CHEBI:57464"/>
        <dbReference type="ChEBI" id="CHEBI:61314"/>
        <dbReference type="EC" id="3.6.1.66"/>
    </reaction>
</comment>
<comment type="catalytic activity">
    <reaction evidence="1">
        <text>dITP + H2O = dIMP + diphosphate + H(+)</text>
        <dbReference type="Rhea" id="RHEA:28342"/>
        <dbReference type="ChEBI" id="CHEBI:15377"/>
        <dbReference type="ChEBI" id="CHEBI:15378"/>
        <dbReference type="ChEBI" id="CHEBI:33019"/>
        <dbReference type="ChEBI" id="CHEBI:61194"/>
        <dbReference type="ChEBI" id="CHEBI:61382"/>
        <dbReference type="EC" id="3.6.1.66"/>
    </reaction>
</comment>
<comment type="catalytic activity">
    <reaction evidence="1">
        <text>ITP + H2O = IMP + diphosphate + H(+)</text>
        <dbReference type="Rhea" id="RHEA:29399"/>
        <dbReference type="ChEBI" id="CHEBI:15377"/>
        <dbReference type="ChEBI" id="CHEBI:15378"/>
        <dbReference type="ChEBI" id="CHEBI:33019"/>
        <dbReference type="ChEBI" id="CHEBI:58053"/>
        <dbReference type="ChEBI" id="CHEBI:61402"/>
        <dbReference type="EC" id="3.6.1.66"/>
    </reaction>
</comment>
<comment type="cofactor">
    <cofactor evidence="1">
        <name>Mg(2+)</name>
        <dbReference type="ChEBI" id="CHEBI:18420"/>
    </cofactor>
    <text evidence="1">Binds 1 Mg(2+) ion per subunit.</text>
</comment>
<comment type="subunit">
    <text evidence="1">Homodimer.</text>
</comment>
<comment type="similarity">
    <text evidence="1">Belongs to the HAM1 NTPase family.</text>
</comment>
<dbReference type="EC" id="3.6.1.66" evidence="1"/>
<dbReference type="EMBL" id="CT573213">
    <property type="protein sequence ID" value="CAJ60158.1"/>
    <property type="molecule type" value="Genomic_DNA"/>
</dbReference>
<dbReference type="RefSeq" id="WP_011602692.1">
    <property type="nucleotide sequence ID" value="NC_008278.1"/>
</dbReference>
<dbReference type="SMR" id="Q0RQL6"/>
<dbReference type="STRING" id="326424.FRAAL1502"/>
<dbReference type="KEGG" id="fal:FRAAL1502"/>
<dbReference type="eggNOG" id="COG0127">
    <property type="taxonomic scope" value="Bacteria"/>
</dbReference>
<dbReference type="HOGENOM" id="CLU_082080_0_1_11"/>
<dbReference type="OrthoDB" id="9807456at2"/>
<dbReference type="Proteomes" id="UP000000657">
    <property type="component" value="Chromosome"/>
</dbReference>
<dbReference type="GO" id="GO:0005829">
    <property type="term" value="C:cytosol"/>
    <property type="evidence" value="ECO:0007669"/>
    <property type="project" value="TreeGrafter"/>
</dbReference>
<dbReference type="GO" id="GO:0035870">
    <property type="term" value="F:dITP diphosphatase activity"/>
    <property type="evidence" value="ECO:0007669"/>
    <property type="project" value="RHEA"/>
</dbReference>
<dbReference type="GO" id="GO:0036220">
    <property type="term" value="F:ITP diphosphatase activity"/>
    <property type="evidence" value="ECO:0007669"/>
    <property type="project" value="UniProtKB-EC"/>
</dbReference>
<dbReference type="GO" id="GO:0046872">
    <property type="term" value="F:metal ion binding"/>
    <property type="evidence" value="ECO:0007669"/>
    <property type="project" value="UniProtKB-KW"/>
</dbReference>
<dbReference type="GO" id="GO:0000166">
    <property type="term" value="F:nucleotide binding"/>
    <property type="evidence" value="ECO:0007669"/>
    <property type="project" value="UniProtKB-KW"/>
</dbReference>
<dbReference type="GO" id="GO:0017111">
    <property type="term" value="F:ribonucleoside triphosphate phosphatase activity"/>
    <property type="evidence" value="ECO:0007669"/>
    <property type="project" value="InterPro"/>
</dbReference>
<dbReference type="GO" id="GO:0036222">
    <property type="term" value="F:XTP diphosphatase activity"/>
    <property type="evidence" value="ECO:0007669"/>
    <property type="project" value="RHEA"/>
</dbReference>
<dbReference type="GO" id="GO:0009117">
    <property type="term" value="P:nucleotide metabolic process"/>
    <property type="evidence" value="ECO:0007669"/>
    <property type="project" value="UniProtKB-KW"/>
</dbReference>
<dbReference type="GO" id="GO:0009146">
    <property type="term" value="P:purine nucleoside triphosphate catabolic process"/>
    <property type="evidence" value="ECO:0007669"/>
    <property type="project" value="UniProtKB-UniRule"/>
</dbReference>
<dbReference type="CDD" id="cd00515">
    <property type="entry name" value="HAM1"/>
    <property type="match status" value="1"/>
</dbReference>
<dbReference type="FunFam" id="3.90.950.10:FF:000001">
    <property type="entry name" value="dITP/XTP pyrophosphatase"/>
    <property type="match status" value="1"/>
</dbReference>
<dbReference type="Gene3D" id="3.90.950.10">
    <property type="match status" value="1"/>
</dbReference>
<dbReference type="HAMAP" id="MF_01405">
    <property type="entry name" value="Non_canon_purine_NTPase"/>
    <property type="match status" value="1"/>
</dbReference>
<dbReference type="InterPro" id="IPR020922">
    <property type="entry name" value="dITP/XTP_pyrophosphatase"/>
</dbReference>
<dbReference type="InterPro" id="IPR029001">
    <property type="entry name" value="ITPase-like_fam"/>
</dbReference>
<dbReference type="InterPro" id="IPR002637">
    <property type="entry name" value="RdgB/HAM1"/>
</dbReference>
<dbReference type="NCBIfam" id="TIGR00042">
    <property type="entry name" value="RdgB/HAM1 family non-canonical purine NTP pyrophosphatase"/>
    <property type="match status" value="1"/>
</dbReference>
<dbReference type="PANTHER" id="PTHR11067:SF9">
    <property type="entry name" value="INOSINE TRIPHOSPHATE PYROPHOSPHATASE"/>
    <property type="match status" value="1"/>
</dbReference>
<dbReference type="PANTHER" id="PTHR11067">
    <property type="entry name" value="INOSINE TRIPHOSPHATE PYROPHOSPHATASE/HAM1 PROTEIN"/>
    <property type="match status" value="1"/>
</dbReference>
<dbReference type="Pfam" id="PF01725">
    <property type="entry name" value="Ham1p_like"/>
    <property type="match status" value="1"/>
</dbReference>
<dbReference type="SUPFAM" id="SSF52972">
    <property type="entry name" value="ITPase-like"/>
    <property type="match status" value="1"/>
</dbReference>
<sequence>MRVVLASRNEAKLTELRRILAASGLSVELVALPDGEEVAETGTTFAENALIKARAAADQTGLPAVADDSGLAVDELSGMPGVRSARWSGRRDGTRVERDEANNALLLAQLDDVPPERRGAAFVCAAALVTPAGVERVTHGELRGVLLTEPRGQAGFGYDPLFLADGQTRTNAELTAAEKDAISHRGLAFRDLATLLREVLTS</sequence>
<reference key="1">
    <citation type="journal article" date="2007" name="Genome Res.">
        <title>Genome characteristics of facultatively symbiotic Frankia sp. strains reflect host range and host plant biogeography.</title>
        <authorList>
            <person name="Normand P."/>
            <person name="Lapierre P."/>
            <person name="Tisa L.S."/>
            <person name="Gogarten J.P."/>
            <person name="Alloisio N."/>
            <person name="Bagnarol E."/>
            <person name="Bassi C.A."/>
            <person name="Berry A.M."/>
            <person name="Bickhart D.M."/>
            <person name="Choisne N."/>
            <person name="Couloux A."/>
            <person name="Cournoyer B."/>
            <person name="Cruveiller S."/>
            <person name="Daubin V."/>
            <person name="Demange N."/>
            <person name="Francino M.P."/>
            <person name="Goltsman E."/>
            <person name="Huang Y."/>
            <person name="Kopp O.R."/>
            <person name="Labarre L."/>
            <person name="Lapidus A."/>
            <person name="Lavire C."/>
            <person name="Marechal J."/>
            <person name="Martinez M."/>
            <person name="Mastronunzio J.E."/>
            <person name="Mullin B.C."/>
            <person name="Niemann J."/>
            <person name="Pujic P."/>
            <person name="Rawnsley T."/>
            <person name="Rouy Z."/>
            <person name="Schenowitz C."/>
            <person name="Sellstedt A."/>
            <person name="Tavares F."/>
            <person name="Tomkins J.P."/>
            <person name="Vallenet D."/>
            <person name="Valverde C."/>
            <person name="Wall L.G."/>
            <person name="Wang Y."/>
            <person name="Medigue C."/>
            <person name="Benson D.R."/>
        </authorList>
    </citation>
    <scope>NUCLEOTIDE SEQUENCE [LARGE SCALE GENOMIC DNA]</scope>
    <source>
        <strain>DSM 45986 / CECT 9034 / ACN14a</strain>
    </source>
</reference>
<gene>
    <name type="ordered locus">FRAAL1502</name>
</gene>
<name>IXTPA_FRAAA</name>
<evidence type="ECO:0000255" key="1">
    <source>
        <dbReference type="HAMAP-Rule" id="MF_01405"/>
    </source>
</evidence>
<accession>Q0RQL6</accession>
<organism>
    <name type="scientific">Frankia alni (strain DSM 45986 / CECT 9034 / ACN14a)</name>
    <dbReference type="NCBI Taxonomy" id="326424"/>
    <lineage>
        <taxon>Bacteria</taxon>
        <taxon>Bacillati</taxon>
        <taxon>Actinomycetota</taxon>
        <taxon>Actinomycetes</taxon>
        <taxon>Frankiales</taxon>
        <taxon>Frankiaceae</taxon>
        <taxon>Frankia</taxon>
    </lineage>
</organism>